<keyword id="KW-1003">Cell membrane</keyword>
<keyword id="KW-0472">Membrane</keyword>
<keyword id="KW-1185">Reference proteome</keyword>
<keyword id="KW-0812">Transmembrane</keyword>
<keyword id="KW-1133">Transmembrane helix</keyword>
<evidence type="ECO:0000255" key="1"/>
<evidence type="ECO:0000305" key="2"/>
<gene>
    <name type="ordered locus">MPN_163</name>
    <name type="ORF">MP668</name>
    <name type="ORF">VXpSPT7_orf112</name>
</gene>
<feature type="chain" id="PRO_0000210447" description="Uncharacterized protein MG149.1 homolog">
    <location>
        <begin position="1"/>
        <end position="136"/>
    </location>
</feature>
<feature type="transmembrane region" description="Helical" evidence="1">
    <location>
        <begin position="36"/>
        <end position="56"/>
    </location>
</feature>
<feature type="transmembrane region" description="Helical" evidence="1">
    <location>
        <begin position="63"/>
        <end position="83"/>
    </location>
</feature>
<accession>P75582</accession>
<organism>
    <name type="scientific">Mycoplasma pneumoniae (strain ATCC 29342 / M129 / Subtype 1)</name>
    <name type="common">Mycoplasmoides pneumoniae</name>
    <dbReference type="NCBI Taxonomy" id="272634"/>
    <lineage>
        <taxon>Bacteria</taxon>
        <taxon>Bacillati</taxon>
        <taxon>Mycoplasmatota</taxon>
        <taxon>Mycoplasmoidales</taxon>
        <taxon>Mycoplasmoidaceae</taxon>
        <taxon>Mycoplasmoides</taxon>
    </lineage>
</organism>
<proteinExistence type="predicted"/>
<protein>
    <recommendedName>
        <fullName>Uncharacterized protein MG149.1 homolog</fullName>
    </recommendedName>
</protein>
<dbReference type="EMBL" id="U00089">
    <property type="protein sequence ID" value="AAB96316.1"/>
    <property type="status" value="ALT_INIT"/>
    <property type="molecule type" value="Genomic_DNA"/>
</dbReference>
<dbReference type="PIR" id="S73994">
    <property type="entry name" value="S73994"/>
</dbReference>
<dbReference type="RefSeq" id="NP_109851.1">
    <property type="nucleotide sequence ID" value="NC_000912.1"/>
</dbReference>
<dbReference type="STRING" id="272634.MPN_163"/>
<dbReference type="EnsemblBacteria" id="AAB96316">
    <property type="protein sequence ID" value="AAB96316"/>
    <property type="gene ID" value="MPN_163"/>
</dbReference>
<dbReference type="KEGG" id="mpn:MPN_163"/>
<dbReference type="PATRIC" id="fig|272634.6.peg.181"/>
<dbReference type="HOGENOM" id="CLU_1957167_0_0_14"/>
<dbReference type="OrthoDB" id="10000996at2"/>
<dbReference type="Proteomes" id="UP000000808">
    <property type="component" value="Chromosome"/>
</dbReference>
<dbReference type="GO" id="GO:0005886">
    <property type="term" value="C:plasma membrane"/>
    <property type="evidence" value="ECO:0007669"/>
    <property type="project" value="UniProtKB-SubCell"/>
</dbReference>
<dbReference type="NCBIfam" id="NF045742">
    <property type="entry name" value="MPN163"/>
    <property type="match status" value="1"/>
</dbReference>
<sequence>MACKRQTSLEKDKELVSSIVTAKSMIDRFFWSILSFLLTNLVFLFVAFLILIIYLISEITQQFAFAFIATIVFIIFYNILFLSYLLTMYIKGLKQIEQKSRYLLLVLDVKADELLPFSFLGSLRKSHMLEEMLLEQ</sequence>
<reference key="1">
    <citation type="journal article" date="1996" name="Nucleic Acids Res.">
        <title>Complete sequence analysis of the genome of the bacterium Mycoplasma pneumoniae.</title>
        <authorList>
            <person name="Himmelreich R."/>
            <person name="Hilbert H."/>
            <person name="Plagens H."/>
            <person name="Pirkl E."/>
            <person name="Li B.-C."/>
            <person name="Herrmann R."/>
        </authorList>
    </citation>
    <scope>NUCLEOTIDE SEQUENCE [LARGE SCALE GENOMIC DNA]</scope>
    <source>
        <strain>ATCC 29342 / M129 / Subtype 1</strain>
    </source>
</reference>
<name>Y163_MYCPN</name>
<comment type="subcellular location">
    <subcellularLocation>
        <location evidence="2">Cell membrane</location>
        <topology evidence="2">Multi-pass membrane protein</topology>
    </subcellularLocation>
</comment>
<comment type="sequence caution" evidence="2">
    <conflict type="erroneous initiation">
        <sequence resource="EMBL-CDS" id="AAB96316"/>
    </conflict>
</comment>